<feature type="chain" id="PRO_0000171094" description="UPF0354 protein BCE_4835">
    <location>
        <begin position="1"/>
        <end position="270"/>
    </location>
</feature>
<evidence type="ECO:0000255" key="1">
    <source>
        <dbReference type="HAMAP-Rule" id="MF_01548"/>
    </source>
</evidence>
<name>Y4835_BACC1</name>
<protein>
    <recommendedName>
        <fullName evidence="1">UPF0354 protein BCE_4835</fullName>
    </recommendedName>
</protein>
<organism>
    <name type="scientific">Bacillus cereus (strain ATCC 10987 / NRS 248)</name>
    <dbReference type="NCBI Taxonomy" id="222523"/>
    <lineage>
        <taxon>Bacteria</taxon>
        <taxon>Bacillati</taxon>
        <taxon>Bacillota</taxon>
        <taxon>Bacilli</taxon>
        <taxon>Bacillales</taxon>
        <taxon>Bacillaceae</taxon>
        <taxon>Bacillus</taxon>
        <taxon>Bacillus cereus group</taxon>
    </lineage>
</organism>
<reference key="1">
    <citation type="journal article" date="2004" name="Nucleic Acids Res.">
        <title>The genome sequence of Bacillus cereus ATCC 10987 reveals metabolic adaptations and a large plasmid related to Bacillus anthracis pXO1.</title>
        <authorList>
            <person name="Rasko D.A."/>
            <person name="Ravel J."/>
            <person name="Oekstad O.A."/>
            <person name="Helgason E."/>
            <person name="Cer R.Z."/>
            <person name="Jiang L."/>
            <person name="Shores K.A."/>
            <person name="Fouts D.E."/>
            <person name="Tourasse N.J."/>
            <person name="Angiuoli S.V."/>
            <person name="Kolonay J.F."/>
            <person name="Nelson W.C."/>
            <person name="Kolstoe A.-B."/>
            <person name="Fraser C.M."/>
            <person name="Read T.D."/>
        </authorList>
    </citation>
    <scope>NUCLEOTIDE SEQUENCE [LARGE SCALE GENOMIC DNA]</scope>
    <source>
        <strain>ATCC 10987 / NRS 248</strain>
    </source>
</reference>
<proteinExistence type="inferred from homology"/>
<gene>
    <name type="ordered locus">BCE_4835</name>
</gene>
<dbReference type="EMBL" id="AE017194">
    <property type="protein sequence ID" value="AAS43736.1"/>
    <property type="molecule type" value="Genomic_DNA"/>
</dbReference>
<dbReference type="DNASU" id="2750901"/>
<dbReference type="KEGG" id="bca:BCE_4835"/>
<dbReference type="HOGENOM" id="CLU_085634_0_0_9"/>
<dbReference type="Proteomes" id="UP000002527">
    <property type="component" value="Chromosome"/>
</dbReference>
<dbReference type="HAMAP" id="MF_01548">
    <property type="entry name" value="UPF0354"/>
    <property type="match status" value="1"/>
</dbReference>
<dbReference type="InterPro" id="IPR010838">
    <property type="entry name" value="DUF1444"/>
</dbReference>
<dbReference type="NCBIfam" id="NF010189">
    <property type="entry name" value="PRK13668.1"/>
    <property type="match status" value="1"/>
</dbReference>
<dbReference type="Pfam" id="PF07285">
    <property type="entry name" value="DUF1444"/>
    <property type="match status" value="1"/>
</dbReference>
<dbReference type="PIRSF" id="PIRSF012562">
    <property type="entry name" value="UCP012562"/>
    <property type="match status" value="1"/>
</dbReference>
<comment type="similarity">
    <text evidence="1">Belongs to the UPF0354 family.</text>
</comment>
<accession>Q72Z34</accession>
<sequence>MKMTSKKMKDELMKRLSRPEWDFQYDSEKEVLRIEQKDSKKGINVSLPGVVAKWEVNKEKAIEEVAYYVQEALIAMHKEENNAAKILPVIRSTSFPKQAEEGNPFIMTDHTAETRIYYALDSNKTYRLIDERLLQKLGLTEQQVREMALFNARSLGYEFKQDTVAGNTFYFLNTNDGYDATRILNESLLQSMREKISGDMVVAVPHQDVLIIADIVNEIGYDIIAQMTMKFFAEGHVPITSLSFVYEDGDFEPIFILAKNRKKTDGKEKG</sequence>